<dbReference type="EC" id="6.1.1.23" evidence="1"/>
<dbReference type="EMBL" id="CP001101">
    <property type="protein sequence ID" value="ACE03958.1"/>
    <property type="molecule type" value="Genomic_DNA"/>
</dbReference>
<dbReference type="SMR" id="B3EQ26"/>
<dbReference type="STRING" id="331678.Cphamn1_1016"/>
<dbReference type="KEGG" id="cpb:Cphamn1_1016"/>
<dbReference type="eggNOG" id="COG0173">
    <property type="taxonomic scope" value="Bacteria"/>
</dbReference>
<dbReference type="HOGENOM" id="CLU_014330_3_2_10"/>
<dbReference type="OrthoDB" id="9802326at2"/>
<dbReference type="GO" id="GO:0005737">
    <property type="term" value="C:cytoplasm"/>
    <property type="evidence" value="ECO:0007669"/>
    <property type="project" value="UniProtKB-SubCell"/>
</dbReference>
<dbReference type="GO" id="GO:0004815">
    <property type="term" value="F:aspartate-tRNA ligase activity"/>
    <property type="evidence" value="ECO:0007669"/>
    <property type="project" value="UniProtKB-UniRule"/>
</dbReference>
<dbReference type="GO" id="GO:0050560">
    <property type="term" value="F:aspartate-tRNA(Asn) ligase activity"/>
    <property type="evidence" value="ECO:0007669"/>
    <property type="project" value="UniProtKB-EC"/>
</dbReference>
<dbReference type="GO" id="GO:0005524">
    <property type="term" value="F:ATP binding"/>
    <property type="evidence" value="ECO:0007669"/>
    <property type="project" value="UniProtKB-UniRule"/>
</dbReference>
<dbReference type="GO" id="GO:0003676">
    <property type="term" value="F:nucleic acid binding"/>
    <property type="evidence" value="ECO:0007669"/>
    <property type="project" value="InterPro"/>
</dbReference>
<dbReference type="GO" id="GO:0006422">
    <property type="term" value="P:aspartyl-tRNA aminoacylation"/>
    <property type="evidence" value="ECO:0007669"/>
    <property type="project" value="UniProtKB-UniRule"/>
</dbReference>
<dbReference type="CDD" id="cd00777">
    <property type="entry name" value="AspRS_core"/>
    <property type="match status" value="1"/>
</dbReference>
<dbReference type="CDD" id="cd04317">
    <property type="entry name" value="EcAspRS_like_N"/>
    <property type="match status" value="1"/>
</dbReference>
<dbReference type="Gene3D" id="3.30.930.10">
    <property type="entry name" value="Bira Bifunctional Protein, Domain 2"/>
    <property type="match status" value="1"/>
</dbReference>
<dbReference type="Gene3D" id="3.30.1360.30">
    <property type="entry name" value="GAD-like domain"/>
    <property type="match status" value="1"/>
</dbReference>
<dbReference type="Gene3D" id="2.40.50.140">
    <property type="entry name" value="Nucleic acid-binding proteins"/>
    <property type="match status" value="1"/>
</dbReference>
<dbReference type="HAMAP" id="MF_00044">
    <property type="entry name" value="Asp_tRNA_synth_type1"/>
    <property type="match status" value="1"/>
</dbReference>
<dbReference type="InterPro" id="IPR004364">
    <property type="entry name" value="Aa-tRNA-synt_II"/>
</dbReference>
<dbReference type="InterPro" id="IPR006195">
    <property type="entry name" value="aa-tRNA-synth_II"/>
</dbReference>
<dbReference type="InterPro" id="IPR045864">
    <property type="entry name" value="aa-tRNA-synth_II/BPL/LPL"/>
</dbReference>
<dbReference type="InterPro" id="IPR004524">
    <property type="entry name" value="Asp-tRNA-ligase_1"/>
</dbReference>
<dbReference type="InterPro" id="IPR047089">
    <property type="entry name" value="Asp-tRNA-ligase_1_N"/>
</dbReference>
<dbReference type="InterPro" id="IPR002312">
    <property type="entry name" value="Asp/Asn-tRNA-synth_IIb"/>
</dbReference>
<dbReference type="InterPro" id="IPR047090">
    <property type="entry name" value="AspRS_core"/>
</dbReference>
<dbReference type="InterPro" id="IPR004115">
    <property type="entry name" value="GAD-like_sf"/>
</dbReference>
<dbReference type="InterPro" id="IPR029351">
    <property type="entry name" value="GAD_dom"/>
</dbReference>
<dbReference type="InterPro" id="IPR012340">
    <property type="entry name" value="NA-bd_OB-fold"/>
</dbReference>
<dbReference type="InterPro" id="IPR004365">
    <property type="entry name" value="NA-bd_OB_tRNA"/>
</dbReference>
<dbReference type="NCBIfam" id="TIGR00459">
    <property type="entry name" value="aspS_bact"/>
    <property type="match status" value="1"/>
</dbReference>
<dbReference type="NCBIfam" id="NF001750">
    <property type="entry name" value="PRK00476.1"/>
    <property type="match status" value="1"/>
</dbReference>
<dbReference type="PANTHER" id="PTHR22594:SF5">
    <property type="entry name" value="ASPARTATE--TRNA LIGASE, MITOCHONDRIAL"/>
    <property type="match status" value="1"/>
</dbReference>
<dbReference type="PANTHER" id="PTHR22594">
    <property type="entry name" value="ASPARTYL/LYSYL-TRNA SYNTHETASE"/>
    <property type="match status" value="1"/>
</dbReference>
<dbReference type="Pfam" id="PF02938">
    <property type="entry name" value="GAD"/>
    <property type="match status" value="1"/>
</dbReference>
<dbReference type="Pfam" id="PF00152">
    <property type="entry name" value="tRNA-synt_2"/>
    <property type="match status" value="1"/>
</dbReference>
<dbReference type="Pfam" id="PF01336">
    <property type="entry name" value="tRNA_anti-codon"/>
    <property type="match status" value="1"/>
</dbReference>
<dbReference type="PRINTS" id="PR01042">
    <property type="entry name" value="TRNASYNTHASP"/>
</dbReference>
<dbReference type="SUPFAM" id="SSF55681">
    <property type="entry name" value="Class II aaRS and biotin synthetases"/>
    <property type="match status" value="1"/>
</dbReference>
<dbReference type="SUPFAM" id="SSF55261">
    <property type="entry name" value="GAD domain-like"/>
    <property type="match status" value="1"/>
</dbReference>
<dbReference type="SUPFAM" id="SSF50249">
    <property type="entry name" value="Nucleic acid-binding proteins"/>
    <property type="match status" value="1"/>
</dbReference>
<dbReference type="PROSITE" id="PS50862">
    <property type="entry name" value="AA_TRNA_LIGASE_II"/>
    <property type="match status" value="1"/>
</dbReference>
<reference key="1">
    <citation type="submission" date="2008-06" db="EMBL/GenBank/DDBJ databases">
        <title>Complete sequence of Chlorobium phaeobacteroides BS1.</title>
        <authorList>
            <consortium name="US DOE Joint Genome Institute"/>
            <person name="Lucas S."/>
            <person name="Copeland A."/>
            <person name="Lapidus A."/>
            <person name="Glavina del Rio T."/>
            <person name="Dalin E."/>
            <person name="Tice H."/>
            <person name="Bruce D."/>
            <person name="Goodwin L."/>
            <person name="Pitluck S."/>
            <person name="Schmutz J."/>
            <person name="Larimer F."/>
            <person name="Land M."/>
            <person name="Hauser L."/>
            <person name="Kyrpides N."/>
            <person name="Ovchinnikova G."/>
            <person name="Li T."/>
            <person name="Liu Z."/>
            <person name="Zhao F."/>
            <person name="Overmann J."/>
            <person name="Bryant D.A."/>
            <person name="Richardson P."/>
        </authorList>
    </citation>
    <scope>NUCLEOTIDE SEQUENCE [LARGE SCALE GENOMIC DNA]</scope>
    <source>
        <strain>BS1</strain>
    </source>
</reference>
<protein>
    <recommendedName>
        <fullName evidence="1">Aspartate--tRNA(Asp/Asn) ligase</fullName>
        <ecNumber evidence="1">6.1.1.23</ecNumber>
    </recommendedName>
    <alternativeName>
        <fullName evidence="1">Aspartyl-tRNA synthetase</fullName>
        <shortName evidence="1">AspRS</shortName>
    </alternativeName>
    <alternativeName>
        <fullName evidence="1">Non-discriminating aspartyl-tRNA synthetase</fullName>
        <shortName evidence="1">ND-AspRS</shortName>
    </alternativeName>
</protein>
<gene>
    <name evidence="1" type="primary">aspS</name>
    <name type="ordered locus">Cphamn1_1016</name>
</gene>
<organism>
    <name type="scientific">Chlorobium phaeobacteroides (strain BS1)</name>
    <dbReference type="NCBI Taxonomy" id="331678"/>
    <lineage>
        <taxon>Bacteria</taxon>
        <taxon>Pseudomonadati</taxon>
        <taxon>Chlorobiota</taxon>
        <taxon>Chlorobiia</taxon>
        <taxon>Chlorobiales</taxon>
        <taxon>Chlorobiaceae</taxon>
        <taxon>Chlorobium/Pelodictyon group</taxon>
        <taxon>Chlorobium</taxon>
    </lineage>
</organism>
<sequence>MSAVAGTADSLQNRFRSHFCGRLHTEFENKTIAVAGWVHRIRDHGGLIFIDLRDHTGICQLIIQPEKEELFRKAEALHTESVICVSGVVVRRSEETVNPRLASGEIEVVVEDIRVESNASPLPFPVADELQTSEELRLKYRFLDLRREKIHENIHFRSRLISEVRRYLEERSFMEIQTPILTSSSPEGARDFLVPSRLHPGKFYALPQAPQQFKQLLMVSGFSRYFQIAPCFRDEDARADRSPGEFYQIDMEMAFIEQDDLFEILEGMFKHLTEKMSNKRITQFPFPRISYKEVMNRYGSDKPDLRIPVEIEDVTELFVNSSFKVFAGNTKEGNCIKAMVLKGRGNESRQFYDKAERRAKELGSAGLAYIQYKEEGPKGPIVKFFSEDEMNDLKERLQIEAGDVVFFGAGKWERTCKIMGGMREYFSDLFELDRDELSFCWVVDFPMYEYDEAAKKIEFSHNPFSMPQGEMEALETMDPLDILAYQYDIVCNGIELSSGAIRNHRPDIMYRAFGIAGYEKAEVDKRFGHMIEAFNMGAPPHGGIAPGLDRLVMILRDEQNIREVIAFPMNQQAEDLMMAAPAEVSPLQLRELSLKLDLPKEEKKEKRS</sequence>
<proteinExistence type="inferred from homology"/>
<feature type="chain" id="PRO_1000090977" description="Aspartate--tRNA(Asp/Asn) ligase">
    <location>
        <begin position="1"/>
        <end position="608"/>
    </location>
</feature>
<feature type="region of interest" description="Aspartate" evidence="1">
    <location>
        <begin position="211"/>
        <end position="214"/>
    </location>
</feature>
<feature type="binding site" evidence="1">
    <location>
        <position position="187"/>
    </location>
    <ligand>
        <name>L-aspartate</name>
        <dbReference type="ChEBI" id="CHEBI:29991"/>
    </ligand>
</feature>
<feature type="binding site" evidence="1">
    <location>
        <begin position="233"/>
        <end position="235"/>
    </location>
    <ligand>
        <name>ATP</name>
        <dbReference type="ChEBI" id="CHEBI:30616"/>
    </ligand>
</feature>
<feature type="binding site" evidence="1">
    <location>
        <position position="233"/>
    </location>
    <ligand>
        <name>L-aspartate</name>
        <dbReference type="ChEBI" id="CHEBI:29991"/>
    </ligand>
</feature>
<feature type="binding site" evidence="1">
    <location>
        <position position="461"/>
    </location>
    <ligand>
        <name>L-aspartate</name>
        <dbReference type="ChEBI" id="CHEBI:29991"/>
    </ligand>
</feature>
<feature type="binding site" evidence="1">
    <location>
        <position position="495"/>
    </location>
    <ligand>
        <name>ATP</name>
        <dbReference type="ChEBI" id="CHEBI:30616"/>
    </ligand>
</feature>
<feature type="binding site" evidence="1">
    <location>
        <position position="502"/>
    </location>
    <ligand>
        <name>L-aspartate</name>
        <dbReference type="ChEBI" id="CHEBI:29991"/>
    </ligand>
</feature>
<feature type="binding site" evidence="1">
    <location>
        <begin position="547"/>
        <end position="550"/>
    </location>
    <ligand>
        <name>ATP</name>
        <dbReference type="ChEBI" id="CHEBI:30616"/>
    </ligand>
</feature>
<feature type="site" description="Important for tRNA non-discrimination" evidence="1">
    <location>
        <position position="44"/>
    </location>
</feature>
<name>SYDND_CHLPB</name>
<accession>B3EQ26</accession>
<evidence type="ECO:0000255" key="1">
    <source>
        <dbReference type="HAMAP-Rule" id="MF_00044"/>
    </source>
</evidence>
<comment type="function">
    <text evidence="1">Aspartyl-tRNA synthetase with relaxed tRNA specificity since it is able to aspartylate not only its cognate tRNA(Asp) but also tRNA(Asn). Reaction proceeds in two steps: L-aspartate is first activated by ATP to form Asp-AMP and then transferred to the acceptor end of tRNA(Asp/Asn).</text>
</comment>
<comment type="catalytic activity">
    <reaction evidence="1">
        <text>tRNA(Asx) + L-aspartate + ATP = L-aspartyl-tRNA(Asx) + AMP + diphosphate</text>
        <dbReference type="Rhea" id="RHEA:18349"/>
        <dbReference type="Rhea" id="RHEA-COMP:9710"/>
        <dbReference type="Rhea" id="RHEA-COMP:9711"/>
        <dbReference type="ChEBI" id="CHEBI:29991"/>
        <dbReference type="ChEBI" id="CHEBI:30616"/>
        <dbReference type="ChEBI" id="CHEBI:33019"/>
        <dbReference type="ChEBI" id="CHEBI:78442"/>
        <dbReference type="ChEBI" id="CHEBI:78516"/>
        <dbReference type="ChEBI" id="CHEBI:456215"/>
        <dbReference type="EC" id="6.1.1.23"/>
    </reaction>
</comment>
<comment type="subunit">
    <text evidence="1">Homodimer.</text>
</comment>
<comment type="subcellular location">
    <subcellularLocation>
        <location evidence="1">Cytoplasm</location>
    </subcellularLocation>
</comment>
<comment type="similarity">
    <text evidence="1">Belongs to the class-II aminoacyl-tRNA synthetase family. Type 1 subfamily.</text>
</comment>
<keyword id="KW-0030">Aminoacyl-tRNA synthetase</keyword>
<keyword id="KW-0067">ATP-binding</keyword>
<keyword id="KW-0963">Cytoplasm</keyword>
<keyword id="KW-0436">Ligase</keyword>
<keyword id="KW-0547">Nucleotide-binding</keyword>
<keyword id="KW-0648">Protein biosynthesis</keyword>